<dbReference type="EC" id="2.7.7.3" evidence="1"/>
<dbReference type="EMBL" id="CP000733">
    <property type="protein sequence ID" value="ABS77450.1"/>
    <property type="molecule type" value="Genomic_DNA"/>
</dbReference>
<dbReference type="RefSeq" id="WP_005771452.1">
    <property type="nucleotide sequence ID" value="NC_009727.1"/>
</dbReference>
<dbReference type="SMR" id="A9KCX4"/>
<dbReference type="KEGG" id="cbd:CBUD_1793"/>
<dbReference type="HOGENOM" id="CLU_100149_0_1_6"/>
<dbReference type="UniPathway" id="UPA00241">
    <property type="reaction ID" value="UER00355"/>
</dbReference>
<dbReference type="Proteomes" id="UP000008555">
    <property type="component" value="Chromosome"/>
</dbReference>
<dbReference type="GO" id="GO:0005737">
    <property type="term" value="C:cytoplasm"/>
    <property type="evidence" value="ECO:0007669"/>
    <property type="project" value="UniProtKB-SubCell"/>
</dbReference>
<dbReference type="GO" id="GO:0005524">
    <property type="term" value="F:ATP binding"/>
    <property type="evidence" value="ECO:0007669"/>
    <property type="project" value="UniProtKB-KW"/>
</dbReference>
<dbReference type="GO" id="GO:0004595">
    <property type="term" value="F:pantetheine-phosphate adenylyltransferase activity"/>
    <property type="evidence" value="ECO:0007669"/>
    <property type="project" value="UniProtKB-UniRule"/>
</dbReference>
<dbReference type="GO" id="GO:0015937">
    <property type="term" value="P:coenzyme A biosynthetic process"/>
    <property type="evidence" value="ECO:0007669"/>
    <property type="project" value="UniProtKB-UniRule"/>
</dbReference>
<dbReference type="CDD" id="cd02163">
    <property type="entry name" value="PPAT"/>
    <property type="match status" value="1"/>
</dbReference>
<dbReference type="Gene3D" id="3.40.50.620">
    <property type="entry name" value="HUPs"/>
    <property type="match status" value="1"/>
</dbReference>
<dbReference type="HAMAP" id="MF_00151">
    <property type="entry name" value="PPAT_bact"/>
    <property type="match status" value="1"/>
</dbReference>
<dbReference type="InterPro" id="IPR004821">
    <property type="entry name" value="Cyt_trans-like"/>
</dbReference>
<dbReference type="InterPro" id="IPR001980">
    <property type="entry name" value="PPAT"/>
</dbReference>
<dbReference type="InterPro" id="IPR014729">
    <property type="entry name" value="Rossmann-like_a/b/a_fold"/>
</dbReference>
<dbReference type="NCBIfam" id="TIGR01510">
    <property type="entry name" value="coaD_prev_kdtB"/>
    <property type="match status" value="1"/>
</dbReference>
<dbReference type="NCBIfam" id="TIGR00125">
    <property type="entry name" value="cyt_tran_rel"/>
    <property type="match status" value="1"/>
</dbReference>
<dbReference type="PANTHER" id="PTHR21342">
    <property type="entry name" value="PHOSPHOPANTETHEINE ADENYLYLTRANSFERASE"/>
    <property type="match status" value="1"/>
</dbReference>
<dbReference type="PANTHER" id="PTHR21342:SF1">
    <property type="entry name" value="PHOSPHOPANTETHEINE ADENYLYLTRANSFERASE"/>
    <property type="match status" value="1"/>
</dbReference>
<dbReference type="Pfam" id="PF01467">
    <property type="entry name" value="CTP_transf_like"/>
    <property type="match status" value="1"/>
</dbReference>
<dbReference type="PRINTS" id="PR01020">
    <property type="entry name" value="LPSBIOSNTHSS"/>
</dbReference>
<dbReference type="SUPFAM" id="SSF52374">
    <property type="entry name" value="Nucleotidylyl transferase"/>
    <property type="match status" value="1"/>
</dbReference>
<gene>
    <name evidence="1" type="primary">coaD</name>
    <name type="ordered locus">CBUD_1793</name>
</gene>
<proteinExistence type="inferred from homology"/>
<feature type="chain" id="PRO_1000076760" description="Phosphopantetheine adenylyltransferase">
    <location>
        <begin position="1"/>
        <end position="159"/>
    </location>
</feature>
<feature type="binding site" evidence="1">
    <location>
        <begin position="10"/>
        <end position="11"/>
    </location>
    <ligand>
        <name>ATP</name>
        <dbReference type="ChEBI" id="CHEBI:30616"/>
    </ligand>
</feature>
<feature type="binding site" evidence="1">
    <location>
        <position position="10"/>
    </location>
    <ligand>
        <name>substrate</name>
    </ligand>
</feature>
<feature type="binding site" evidence="1">
    <location>
        <position position="18"/>
    </location>
    <ligand>
        <name>ATP</name>
        <dbReference type="ChEBI" id="CHEBI:30616"/>
    </ligand>
</feature>
<feature type="binding site" evidence="1">
    <location>
        <position position="42"/>
    </location>
    <ligand>
        <name>substrate</name>
    </ligand>
</feature>
<feature type="binding site" evidence="1">
    <location>
        <position position="73"/>
    </location>
    <ligand>
        <name>substrate</name>
    </ligand>
</feature>
<feature type="binding site" evidence="1">
    <location>
        <position position="87"/>
    </location>
    <ligand>
        <name>substrate</name>
    </ligand>
</feature>
<feature type="binding site" evidence="1">
    <location>
        <begin position="88"/>
        <end position="90"/>
    </location>
    <ligand>
        <name>ATP</name>
        <dbReference type="ChEBI" id="CHEBI:30616"/>
    </ligand>
</feature>
<feature type="binding site" evidence="1">
    <location>
        <position position="98"/>
    </location>
    <ligand>
        <name>ATP</name>
        <dbReference type="ChEBI" id="CHEBI:30616"/>
    </ligand>
</feature>
<feature type="binding site" evidence="1">
    <location>
        <begin position="123"/>
        <end position="129"/>
    </location>
    <ligand>
        <name>ATP</name>
        <dbReference type="ChEBI" id="CHEBI:30616"/>
    </ligand>
</feature>
<feature type="site" description="Transition state stabilizer" evidence="1">
    <location>
        <position position="18"/>
    </location>
</feature>
<evidence type="ECO:0000255" key="1">
    <source>
        <dbReference type="HAMAP-Rule" id="MF_00151"/>
    </source>
</evidence>
<protein>
    <recommendedName>
        <fullName evidence="1">Phosphopantetheine adenylyltransferase</fullName>
        <ecNumber evidence="1">2.7.7.3</ecNumber>
    </recommendedName>
    <alternativeName>
        <fullName evidence="1">Dephospho-CoA pyrophosphorylase</fullName>
    </alternativeName>
    <alternativeName>
        <fullName evidence="1">Pantetheine-phosphate adenylyltransferase</fullName>
        <shortName evidence="1">PPAT</shortName>
    </alternativeName>
</protein>
<sequence length="159" mass="17967">MKPIAIYPGTFDPLTNGHVDIIERALPLFNKIIVACAPTSRKDPHLKLEERVNLIADVLTDERVEVLPLTGLLVDFAKTHQANFILRGLRAVSDFDYEFQLAHMNYQLSPEIETIFLPAREGYSYVSGTMVREIVTLGGDVSPFVPPLVARHLQKRREK</sequence>
<comment type="function">
    <text evidence="1">Reversibly transfers an adenylyl group from ATP to 4'-phosphopantetheine, yielding dephospho-CoA (dPCoA) and pyrophosphate.</text>
</comment>
<comment type="catalytic activity">
    <reaction evidence="1">
        <text>(R)-4'-phosphopantetheine + ATP + H(+) = 3'-dephospho-CoA + diphosphate</text>
        <dbReference type="Rhea" id="RHEA:19801"/>
        <dbReference type="ChEBI" id="CHEBI:15378"/>
        <dbReference type="ChEBI" id="CHEBI:30616"/>
        <dbReference type="ChEBI" id="CHEBI:33019"/>
        <dbReference type="ChEBI" id="CHEBI:57328"/>
        <dbReference type="ChEBI" id="CHEBI:61723"/>
        <dbReference type="EC" id="2.7.7.3"/>
    </reaction>
</comment>
<comment type="cofactor">
    <cofactor evidence="1">
        <name>Mg(2+)</name>
        <dbReference type="ChEBI" id="CHEBI:18420"/>
    </cofactor>
</comment>
<comment type="pathway">
    <text evidence="1">Cofactor biosynthesis; coenzyme A biosynthesis; CoA from (R)-pantothenate: step 4/5.</text>
</comment>
<comment type="subunit">
    <text evidence="1">Homohexamer.</text>
</comment>
<comment type="subcellular location">
    <subcellularLocation>
        <location evidence="1">Cytoplasm</location>
    </subcellularLocation>
</comment>
<comment type="similarity">
    <text evidence="1">Belongs to the bacterial CoaD family.</text>
</comment>
<reference key="1">
    <citation type="journal article" date="2009" name="Infect. Immun.">
        <title>Comparative genomics reveal extensive transposon-mediated genomic plasticity and diversity among potential effector proteins within the genus Coxiella.</title>
        <authorList>
            <person name="Beare P.A."/>
            <person name="Unsworth N."/>
            <person name="Andoh M."/>
            <person name="Voth D.E."/>
            <person name="Omsland A."/>
            <person name="Gilk S.D."/>
            <person name="Williams K.P."/>
            <person name="Sobral B.W."/>
            <person name="Kupko J.J. III"/>
            <person name="Porcella S.F."/>
            <person name="Samuel J.E."/>
            <person name="Heinzen R.A."/>
        </authorList>
    </citation>
    <scope>NUCLEOTIDE SEQUENCE [LARGE SCALE GENOMIC DNA]</scope>
    <source>
        <strain>Dugway 5J108-111</strain>
    </source>
</reference>
<name>COAD_COXBN</name>
<organism>
    <name type="scientific">Coxiella burnetii (strain Dugway 5J108-111)</name>
    <dbReference type="NCBI Taxonomy" id="434922"/>
    <lineage>
        <taxon>Bacteria</taxon>
        <taxon>Pseudomonadati</taxon>
        <taxon>Pseudomonadota</taxon>
        <taxon>Gammaproteobacteria</taxon>
        <taxon>Legionellales</taxon>
        <taxon>Coxiellaceae</taxon>
        <taxon>Coxiella</taxon>
    </lineage>
</organism>
<accession>A9KCX4</accession>
<keyword id="KW-0067">ATP-binding</keyword>
<keyword id="KW-0173">Coenzyme A biosynthesis</keyword>
<keyword id="KW-0963">Cytoplasm</keyword>
<keyword id="KW-0460">Magnesium</keyword>
<keyword id="KW-0547">Nucleotide-binding</keyword>
<keyword id="KW-0548">Nucleotidyltransferase</keyword>
<keyword id="KW-0808">Transferase</keyword>